<protein>
    <recommendedName>
        <fullName evidence="1">Trigger factor</fullName>
        <shortName evidence="1">TF</shortName>
        <ecNumber evidence="1">5.2.1.8</ecNumber>
    </recommendedName>
    <alternativeName>
        <fullName evidence="1">PPIase</fullName>
    </alternativeName>
</protein>
<proteinExistence type="inferred from homology"/>
<gene>
    <name evidence="1" type="primary">tig</name>
    <name type="ordered locus">MYPE6920</name>
</gene>
<comment type="function">
    <text evidence="1">Involved in protein export. Acts as a chaperone by maintaining the newly synthesized protein in an open conformation. Functions as a peptidyl-prolyl cis-trans isomerase.</text>
</comment>
<comment type="catalytic activity">
    <reaction evidence="1">
        <text>[protein]-peptidylproline (omega=180) = [protein]-peptidylproline (omega=0)</text>
        <dbReference type="Rhea" id="RHEA:16237"/>
        <dbReference type="Rhea" id="RHEA-COMP:10747"/>
        <dbReference type="Rhea" id="RHEA-COMP:10748"/>
        <dbReference type="ChEBI" id="CHEBI:83833"/>
        <dbReference type="ChEBI" id="CHEBI:83834"/>
        <dbReference type="EC" id="5.2.1.8"/>
    </reaction>
</comment>
<comment type="subcellular location">
    <subcellularLocation>
        <location>Cytoplasm</location>
    </subcellularLocation>
    <text evidence="1">About half TF is bound to the ribosome near the polypeptide exit tunnel while the other half is free in the cytoplasm.</text>
</comment>
<comment type="domain">
    <text evidence="1">Consists of 3 domains; the N-terminus binds the ribosome, the middle domain has PPIase activity, while the C-terminus has intrinsic chaperone activity on its own.</text>
</comment>
<comment type="similarity">
    <text evidence="1">Belongs to the FKBP-type PPIase family. Tig subfamily.</text>
</comment>
<sequence length="445" mass="50798">MKITSVKNEKELVSFEIDLSEKKWNEFLDKEILKASKNLKMPGYRPGKVPLEIAKKNINMPVCFVNALSSARERIEDWIIDQDEFKKMADEICDFDPVTSKPNNSNNVLNKTVSFTMSFGKYPEFKVKNVKDIKIEKIESKVNKQMVDQAIEKELAKNETMSVKERAAKLNDIVIIDFKGYVDNVAFEGGEAKNYELKLGSKSFIDNFEEQLVGLKAGDKKDVNVTFPKDYHVANLKGKKAKFEVTVHVVNEVETPKLDDEFVKSLNLKNVNTVAEYKKHLEAELQKQLDGTVDNQIQSALYTELNKMVPSDLKIHEGLVNNVAEIFISRLMISLIGKVVNIDEFVKMIDGGRGALTKEKLIEEEKNQAREYLKVKFALKQYSKVEKISVSNEDIEKEIKEIAANSNTKEKEIKEDFAVYSSIKREALDKKVFEYLKNQVAKAAK</sequence>
<evidence type="ECO:0000255" key="1">
    <source>
        <dbReference type="HAMAP-Rule" id="MF_00303"/>
    </source>
</evidence>
<organism>
    <name type="scientific">Malacoplasma penetrans (strain HF-2)</name>
    <name type="common">Mycoplasma penetrans</name>
    <dbReference type="NCBI Taxonomy" id="272633"/>
    <lineage>
        <taxon>Bacteria</taxon>
        <taxon>Bacillati</taxon>
        <taxon>Mycoplasmatota</taxon>
        <taxon>Mycoplasmoidales</taxon>
        <taxon>Mycoplasmoidaceae</taxon>
        <taxon>Malacoplasma</taxon>
    </lineage>
</organism>
<feature type="chain" id="PRO_0000179387" description="Trigger factor">
    <location>
        <begin position="1"/>
        <end position="445"/>
    </location>
</feature>
<feature type="domain" description="PPIase FKBP-type" evidence="1">
    <location>
        <begin position="171"/>
        <end position="256"/>
    </location>
</feature>
<accession>Q8EV76</accession>
<keyword id="KW-0131">Cell cycle</keyword>
<keyword id="KW-0132">Cell division</keyword>
<keyword id="KW-0143">Chaperone</keyword>
<keyword id="KW-0963">Cytoplasm</keyword>
<keyword id="KW-0413">Isomerase</keyword>
<keyword id="KW-1185">Reference proteome</keyword>
<keyword id="KW-0697">Rotamase</keyword>
<dbReference type="EC" id="5.2.1.8" evidence="1"/>
<dbReference type="EMBL" id="BA000026">
    <property type="protein sequence ID" value="BAC44484.1"/>
    <property type="molecule type" value="Genomic_DNA"/>
</dbReference>
<dbReference type="RefSeq" id="WP_011077514.1">
    <property type="nucleotide sequence ID" value="NC_004432.1"/>
</dbReference>
<dbReference type="SMR" id="Q8EV76"/>
<dbReference type="FunCoup" id="Q8EV76">
    <property type="interactions" value="262"/>
</dbReference>
<dbReference type="STRING" id="272633.gene:10731813"/>
<dbReference type="KEGG" id="mpe:MYPE6920"/>
<dbReference type="eggNOG" id="COG0544">
    <property type="taxonomic scope" value="Bacteria"/>
</dbReference>
<dbReference type="HOGENOM" id="CLU_033058_3_2_14"/>
<dbReference type="InParanoid" id="Q8EV76"/>
<dbReference type="Proteomes" id="UP000002522">
    <property type="component" value="Chromosome"/>
</dbReference>
<dbReference type="GO" id="GO:0005737">
    <property type="term" value="C:cytoplasm"/>
    <property type="evidence" value="ECO:0007669"/>
    <property type="project" value="UniProtKB-SubCell"/>
</dbReference>
<dbReference type="GO" id="GO:0003755">
    <property type="term" value="F:peptidyl-prolyl cis-trans isomerase activity"/>
    <property type="evidence" value="ECO:0007669"/>
    <property type="project" value="UniProtKB-UniRule"/>
</dbReference>
<dbReference type="GO" id="GO:0051301">
    <property type="term" value="P:cell division"/>
    <property type="evidence" value="ECO:0007669"/>
    <property type="project" value="UniProtKB-KW"/>
</dbReference>
<dbReference type="GO" id="GO:0006457">
    <property type="term" value="P:protein folding"/>
    <property type="evidence" value="ECO:0007669"/>
    <property type="project" value="UniProtKB-UniRule"/>
</dbReference>
<dbReference type="GO" id="GO:0015031">
    <property type="term" value="P:protein transport"/>
    <property type="evidence" value="ECO:0007669"/>
    <property type="project" value="UniProtKB-UniRule"/>
</dbReference>
<dbReference type="FunFam" id="3.10.50.40:FF:000001">
    <property type="entry name" value="Trigger factor"/>
    <property type="match status" value="1"/>
</dbReference>
<dbReference type="Gene3D" id="3.10.50.40">
    <property type="match status" value="1"/>
</dbReference>
<dbReference type="Gene3D" id="3.30.70.1050">
    <property type="entry name" value="Trigger factor ribosome-binding domain"/>
    <property type="match status" value="1"/>
</dbReference>
<dbReference type="Gene3D" id="1.10.3120.10">
    <property type="entry name" value="Trigger factor, C-terminal domain"/>
    <property type="match status" value="1"/>
</dbReference>
<dbReference type="HAMAP" id="MF_00303">
    <property type="entry name" value="Trigger_factor_Tig"/>
    <property type="match status" value="1"/>
</dbReference>
<dbReference type="InterPro" id="IPR046357">
    <property type="entry name" value="PPIase_dom_sf"/>
</dbReference>
<dbReference type="InterPro" id="IPR001179">
    <property type="entry name" value="PPIase_FKBP_dom"/>
</dbReference>
<dbReference type="InterPro" id="IPR005215">
    <property type="entry name" value="Trig_fac"/>
</dbReference>
<dbReference type="InterPro" id="IPR008880">
    <property type="entry name" value="Trigger_fac_C"/>
</dbReference>
<dbReference type="InterPro" id="IPR037041">
    <property type="entry name" value="Trigger_fac_C_sf"/>
</dbReference>
<dbReference type="InterPro" id="IPR008881">
    <property type="entry name" value="Trigger_fac_ribosome-bd_bac"/>
</dbReference>
<dbReference type="InterPro" id="IPR036611">
    <property type="entry name" value="Trigger_fac_ribosome-bd_sf"/>
</dbReference>
<dbReference type="InterPro" id="IPR027304">
    <property type="entry name" value="Trigger_fact/SurA_dom_sf"/>
</dbReference>
<dbReference type="NCBIfam" id="TIGR00115">
    <property type="entry name" value="tig"/>
    <property type="match status" value="1"/>
</dbReference>
<dbReference type="Pfam" id="PF00254">
    <property type="entry name" value="FKBP_C"/>
    <property type="match status" value="1"/>
</dbReference>
<dbReference type="Pfam" id="PF05698">
    <property type="entry name" value="Trigger_C"/>
    <property type="match status" value="1"/>
</dbReference>
<dbReference type="Pfam" id="PF05697">
    <property type="entry name" value="Trigger_N"/>
    <property type="match status" value="1"/>
</dbReference>
<dbReference type="PIRSF" id="PIRSF003095">
    <property type="entry name" value="Trigger_factor"/>
    <property type="match status" value="1"/>
</dbReference>
<dbReference type="SUPFAM" id="SSF54534">
    <property type="entry name" value="FKBP-like"/>
    <property type="match status" value="1"/>
</dbReference>
<dbReference type="SUPFAM" id="SSF109998">
    <property type="entry name" value="Triger factor/SurA peptide-binding domain-like"/>
    <property type="match status" value="1"/>
</dbReference>
<dbReference type="SUPFAM" id="SSF102735">
    <property type="entry name" value="Trigger factor ribosome-binding domain"/>
    <property type="match status" value="1"/>
</dbReference>
<dbReference type="PROSITE" id="PS50059">
    <property type="entry name" value="FKBP_PPIASE"/>
    <property type="match status" value="1"/>
</dbReference>
<reference key="1">
    <citation type="journal article" date="2002" name="Nucleic Acids Res.">
        <title>The complete genomic sequence of Mycoplasma penetrans, an intracellular bacterial pathogen in humans.</title>
        <authorList>
            <person name="Sasaki Y."/>
            <person name="Ishikawa J."/>
            <person name="Yamashita A."/>
            <person name="Oshima K."/>
            <person name="Kenri T."/>
            <person name="Furuya K."/>
            <person name="Yoshino C."/>
            <person name="Horino A."/>
            <person name="Shiba T."/>
            <person name="Sasaki T."/>
            <person name="Hattori M."/>
        </authorList>
    </citation>
    <scope>NUCLEOTIDE SEQUENCE [LARGE SCALE GENOMIC DNA]</scope>
    <source>
        <strain>HF-2</strain>
    </source>
</reference>
<name>TIG_MALP2</name>